<evidence type="ECO:0000250" key="1"/>
<evidence type="ECO:0000255" key="2"/>
<evidence type="ECO:0000305" key="3"/>
<organism>
    <name type="scientific">Vanderwaltozyma polyspora (strain ATCC 22028 / DSM 70294 / BCRC 21397 / CBS 2163 / NBRC 10782 / NRRL Y-8283 / UCD 57-17)</name>
    <name type="common">Kluyveromyces polysporus</name>
    <dbReference type="NCBI Taxonomy" id="436907"/>
    <lineage>
        <taxon>Eukaryota</taxon>
        <taxon>Fungi</taxon>
        <taxon>Dikarya</taxon>
        <taxon>Ascomycota</taxon>
        <taxon>Saccharomycotina</taxon>
        <taxon>Saccharomycetes</taxon>
        <taxon>Saccharomycetales</taxon>
        <taxon>Saccharomycetaceae</taxon>
        <taxon>Vanderwaltozyma</taxon>
    </lineage>
</organism>
<name>AIM24_VANPO</name>
<dbReference type="EMBL" id="DS480421">
    <property type="protein sequence ID" value="EDO16592.1"/>
    <property type="molecule type" value="Genomic_DNA"/>
</dbReference>
<dbReference type="RefSeq" id="XP_001644450.1">
    <property type="nucleotide sequence ID" value="XM_001644400.1"/>
</dbReference>
<dbReference type="FunCoup" id="A7TM98">
    <property type="interactions" value="19"/>
</dbReference>
<dbReference type="GeneID" id="5544753"/>
<dbReference type="KEGG" id="vpo:Kpol_520p13"/>
<dbReference type="eggNOG" id="ENOG502RXC5">
    <property type="taxonomic scope" value="Eukaryota"/>
</dbReference>
<dbReference type="HOGENOM" id="CLU_057912_0_0_1"/>
<dbReference type="InParanoid" id="A7TM98"/>
<dbReference type="OMA" id="NGPYDLQ"/>
<dbReference type="OrthoDB" id="5295771at2759"/>
<dbReference type="PhylomeDB" id="A7TM98"/>
<dbReference type="Proteomes" id="UP000000267">
    <property type="component" value="Unassembled WGS sequence"/>
</dbReference>
<dbReference type="GO" id="GO:0005743">
    <property type="term" value="C:mitochondrial inner membrane"/>
    <property type="evidence" value="ECO:0007669"/>
    <property type="project" value="TreeGrafter"/>
</dbReference>
<dbReference type="GO" id="GO:0007007">
    <property type="term" value="P:inner mitochondrial membrane organization"/>
    <property type="evidence" value="ECO:0007669"/>
    <property type="project" value="TreeGrafter"/>
</dbReference>
<dbReference type="Gene3D" id="3.60.160.10">
    <property type="entry name" value="Mitochondrial biogenesis AIM24"/>
    <property type="match status" value="1"/>
</dbReference>
<dbReference type="InterPro" id="IPR002838">
    <property type="entry name" value="AIM24"/>
</dbReference>
<dbReference type="InterPro" id="IPR036983">
    <property type="entry name" value="AIM24_sf"/>
</dbReference>
<dbReference type="InterPro" id="IPR016031">
    <property type="entry name" value="Trp_RNA-bd_attenuator-like_dom"/>
</dbReference>
<dbReference type="PANTHER" id="PTHR36959">
    <property type="entry name" value="ALTERED INHERITANCE OF MITOCHONDRIA PROTEIN 24, MITOCHONDRIAL"/>
    <property type="match status" value="1"/>
</dbReference>
<dbReference type="PANTHER" id="PTHR36959:SF2">
    <property type="entry name" value="ALTERED INHERITANCE OF MITOCHONDRIA PROTEIN 24, MITOCHONDRIAL"/>
    <property type="match status" value="1"/>
</dbReference>
<dbReference type="Pfam" id="PF01987">
    <property type="entry name" value="AIM24"/>
    <property type="match status" value="1"/>
</dbReference>
<dbReference type="SUPFAM" id="SSF51219">
    <property type="entry name" value="TRAP-like"/>
    <property type="match status" value="1"/>
</dbReference>
<sequence>MNNNKLLFAPFANKRFITLIPNSKVVKPAIDDSTGTENLFNVEDLKTTTFNAIGEPSTMASLSVPPRIPLYIRRGCIVSLYNNKSSKDSNISMTHEWKSIIFNLFSYSSITSSLFIKLTSDKSFGLLVAPNFTSNIIPLLSKNSYSTLCTLNLNGSADWNIWGKNSIVAYEGNTSLNIVSNPLFNWRSVFKKRPIYSRKFQTIAGRGNVLLSGSGSIYTIELKTKEDEIVIKSECLLGISGSTQLEIKDSISEQKYISNDIIDQKPQPVLKDVKLSDLNKLTKEEYKIYFKDLYHLTSWWIKKTYIKWISGSTKFLKVKGPRNVLIQTGHNVYLPNIPTKKQETNLSVPEESLLTERDAQVKSEMKYTNYVTISRSGDVKFQSTPNFNETINKLKKN</sequence>
<protein>
    <recommendedName>
        <fullName>Altered inheritance of mitochondria protein 24, mitochondrial</fullName>
    </recommendedName>
</protein>
<keyword id="KW-0496">Mitochondrion</keyword>
<keyword id="KW-1185">Reference proteome</keyword>
<keyword id="KW-0809">Transit peptide</keyword>
<proteinExistence type="inferred from homology"/>
<feature type="transit peptide" description="Mitochondrion" evidence="2">
    <location>
        <begin position="1"/>
        <end position="24"/>
    </location>
</feature>
<feature type="chain" id="PRO_0000399594" description="Altered inheritance of mitochondria protein 24, mitochondrial">
    <location>
        <begin position="25"/>
        <end position="397"/>
    </location>
</feature>
<reference key="1">
    <citation type="journal article" date="2007" name="Proc. Natl. Acad. Sci. U.S.A.">
        <title>Independent sorting-out of thousands of duplicated gene pairs in two yeast species descended from a whole-genome duplication.</title>
        <authorList>
            <person name="Scannell D.R."/>
            <person name="Frank A.C."/>
            <person name="Conant G.C."/>
            <person name="Byrne K.P."/>
            <person name="Woolfit M."/>
            <person name="Wolfe K.H."/>
        </authorList>
    </citation>
    <scope>NUCLEOTIDE SEQUENCE [LARGE SCALE GENOMIC DNA]</scope>
    <source>
        <strain>ATCC 22028 / DSM 70294 / BCRC 21397 / CBS 2163 / NBRC 10782 / NRRL Y-8283 / UCD 57-17</strain>
    </source>
</reference>
<comment type="subcellular location">
    <subcellularLocation>
        <location evidence="1">Mitochondrion</location>
    </subcellularLocation>
</comment>
<comment type="similarity">
    <text evidence="3">Belongs to the AIM24 family.</text>
</comment>
<accession>A7TM98</accession>
<gene>
    <name type="primary">AIM24</name>
    <name type="ORF">Kpol_520p13</name>
</gene>